<name>SCRKL_DICDI</name>
<comment type="similarity">
    <text evidence="1">Belongs to the carbohydrate kinase PfkB family.</text>
</comment>
<sequence>MTIQIFGTVCIDKVRKIEEFPKSLGTYTPVISEQILLGGEASNTFVCINEWVEKGQESIKLIVPPLVDDLNGKFIINKLNQSTGKTSDKNVIFTQIQEINNNNENNYLKYTPITDIYVCNKKERTMFGIGFPEIDQYMVQCKEIKEKILNVDLQFGPNHWISLDANYPLINREVIKKSIITNTNLYIMDQELDTVVDELSLENTSIEHTSNLIFQSSSDHFGNKDGPIKEFFNIMNQWFQKDNGIFKKFLFILTDSKNGFGIGGTWNNEWIEPYWFTPSAIPSDKVVDTTGAGDSFRAGLIFSLVHKNQSLSDSLEFASACGALNCLSIGGCSSTPTLNSINQFLKLNNKNQMFL</sequence>
<evidence type="ECO:0000305" key="1"/>
<protein>
    <recommendedName>
        <fullName>Uncharacterized sugar kinase</fullName>
        <ecNumber>2.7.1.-</ecNumber>
    </recommendedName>
</protein>
<keyword id="KW-0067">ATP-binding</keyword>
<keyword id="KW-0119">Carbohydrate metabolism</keyword>
<keyword id="KW-0418">Kinase</keyword>
<keyword id="KW-0547">Nucleotide-binding</keyword>
<keyword id="KW-1185">Reference proteome</keyword>
<keyword id="KW-0808">Transferase</keyword>
<proteinExistence type="inferred from homology"/>
<reference key="1">
    <citation type="journal article" date="2005" name="Nature">
        <title>The genome of the social amoeba Dictyostelium discoideum.</title>
        <authorList>
            <person name="Eichinger L."/>
            <person name="Pachebat J.A."/>
            <person name="Gloeckner G."/>
            <person name="Rajandream M.A."/>
            <person name="Sucgang R."/>
            <person name="Berriman M."/>
            <person name="Song J."/>
            <person name="Olsen R."/>
            <person name="Szafranski K."/>
            <person name="Xu Q."/>
            <person name="Tunggal B."/>
            <person name="Kummerfeld S."/>
            <person name="Madera M."/>
            <person name="Konfortov B.A."/>
            <person name="Rivero F."/>
            <person name="Bankier A.T."/>
            <person name="Lehmann R."/>
            <person name="Hamlin N."/>
            <person name="Davies R."/>
            <person name="Gaudet P."/>
            <person name="Fey P."/>
            <person name="Pilcher K."/>
            <person name="Chen G."/>
            <person name="Saunders D."/>
            <person name="Sodergren E.J."/>
            <person name="Davis P."/>
            <person name="Kerhornou A."/>
            <person name="Nie X."/>
            <person name="Hall N."/>
            <person name="Anjard C."/>
            <person name="Hemphill L."/>
            <person name="Bason N."/>
            <person name="Farbrother P."/>
            <person name="Desany B."/>
            <person name="Just E."/>
            <person name="Morio T."/>
            <person name="Rost R."/>
            <person name="Churcher C.M."/>
            <person name="Cooper J."/>
            <person name="Haydock S."/>
            <person name="van Driessche N."/>
            <person name="Cronin A."/>
            <person name="Goodhead I."/>
            <person name="Muzny D.M."/>
            <person name="Mourier T."/>
            <person name="Pain A."/>
            <person name="Lu M."/>
            <person name="Harper D."/>
            <person name="Lindsay R."/>
            <person name="Hauser H."/>
            <person name="James K.D."/>
            <person name="Quiles M."/>
            <person name="Madan Babu M."/>
            <person name="Saito T."/>
            <person name="Buchrieser C."/>
            <person name="Wardroper A."/>
            <person name="Felder M."/>
            <person name="Thangavelu M."/>
            <person name="Johnson D."/>
            <person name="Knights A."/>
            <person name="Loulseged H."/>
            <person name="Mungall K.L."/>
            <person name="Oliver K."/>
            <person name="Price C."/>
            <person name="Quail M.A."/>
            <person name="Urushihara H."/>
            <person name="Hernandez J."/>
            <person name="Rabbinowitsch E."/>
            <person name="Steffen D."/>
            <person name="Sanders M."/>
            <person name="Ma J."/>
            <person name="Kohara Y."/>
            <person name="Sharp S."/>
            <person name="Simmonds M.N."/>
            <person name="Spiegler S."/>
            <person name="Tivey A."/>
            <person name="Sugano S."/>
            <person name="White B."/>
            <person name="Walker D."/>
            <person name="Woodward J.R."/>
            <person name="Winckler T."/>
            <person name="Tanaka Y."/>
            <person name="Shaulsky G."/>
            <person name="Schleicher M."/>
            <person name="Weinstock G.M."/>
            <person name="Rosenthal A."/>
            <person name="Cox E.C."/>
            <person name="Chisholm R.L."/>
            <person name="Gibbs R.A."/>
            <person name="Loomis W.F."/>
            <person name="Platzer M."/>
            <person name="Kay R.R."/>
            <person name="Williams J.G."/>
            <person name="Dear P.H."/>
            <person name="Noegel A.A."/>
            <person name="Barrell B.G."/>
            <person name="Kuspa A."/>
        </authorList>
    </citation>
    <scope>NUCLEOTIDE SEQUENCE [LARGE SCALE GENOMIC DNA]</scope>
    <source>
        <strain>AX4</strain>
    </source>
</reference>
<dbReference type="EC" id="2.7.1.-"/>
<dbReference type="EMBL" id="AAFI02000190">
    <property type="protein sequence ID" value="EAL61199.1"/>
    <property type="molecule type" value="Genomic_DNA"/>
</dbReference>
<dbReference type="RefSeq" id="XP_629616.1">
    <property type="nucleotide sequence ID" value="XM_629614.1"/>
</dbReference>
<dbReference type="SMR" id="Q54D80"/>
<dbReference type="FunCoup" id="Q54D80">
    <property type="interactions" value="116"/>
</dbReference>
<dbReference type="STRING" id="44689.Q54D80"/>
<dbReference type="PaxDb" id="44689-DDB0266369"/>
<dbReference type="EnsemblProtists" id="EAL61199">
    <property type="protein sequence ID" value="EAL61199"/>
    <property type="gene ID" value="DDB_G0292440"/>
</dbReference>
<dbReference type="GeneID" id="8628679"/>
<dbReference type="KEGG" id="ddi:DDB_G0292440"/>
<dbReference type="dictyBase" id="DDB_G0292440"/>
<dbReference type="VEuPathDB" id="AmoebaDB:DDB_G0292440"/>
<dbReference type="eggNOG" id="ENOG502RCI5">
    <property type="taxonomic scope" value="Eukaryota"/>
</dbReference>
<dbReference type="HOGENOM" id="CLU_781737_0_0_1"/>
<dbReference type="InParanoid" id="Q54D80"/>
<dbReference type="OMA" id="KERTMFG"/>
<dbReference type="Reactome" id="R-DDI-70350">
    <property type="pathway name" value="Fructose catabolism"/>
</dbReference>
<dbReference type="PRO" id="PR:Q54D80"/>
<dbReference type="Proteomes" id="UP000002195">
    <property type="component" value="Chromosome 6"/>
</dbReference>
<dbReference type="GO" id="GO:0005737">
    <property type="term" value="C:cytoplasm"/>
    <property type="evidence" value="ECO:0000318"/>
    <property type="project" value="GO_Central"/>
</dbReference>
<dbReference type="GO" id="GO:0005524">
    <property type="term" value="F:ATP binding"/>
    <property type="evidence" value="ECO:0007669"/>
    <property type="project" value="UniProtKB-KW"/>
</dbReference>
<dbReference type="GO" id="GO:0004454">
    <property type="term" value="F:ketohexokinase activity"/>
    <property type="evidence" value="ECO:0000318"/>
    <property type="project" value="GO_Central"/>
</dbReference>
<dbReference type="GO" id="GO:0006000">
    <property type="term" value="P:fructose metabolic process"/>
    <property type="evidence" value="ECO:0000318"/>
    <property type="project" value="GO_Central"/>
</dbReference>
<dbReference type="GO" id="GO:0070873">
    <property type="term" value="P:regulation of glycogen metabolic process"/>
    <property type="evidence" value="ECO:0000318"/>
    <property type="project" value="GO_Central"/>
</dbReference>
<dbReference type="GO" id="GO:0009750">
    <property type="term" value="P:response to fructose"/>
    <property type="evidence" value="ECO:0000318"/>
    <property type="project" value="GO_Central"/>
</dbReference>
<dbReference type="GO" id="GO:0009749">
    <property type="term" value="P:response to glucose"/>
    <property type="evidence" value="ECO:0000318"/>
    <property type="project" value="GO_Central"/>
</dbReference>
<dbReference type="GO" id="GO:0032868">
    <property type="term" value="P:response to insulin"/>
    <property type="evidence" value="ECO:0000318"/>
    <property type="project" value="GO_Central"/>
</dbReference>
<dbReference type="GO" id="GO:0009744">
    <property type="term" value="P:response to sucrose"/>
    <property type="evidence" value="ECO:0000318"/>
    <property type="project" value="GO_Central"/>
</dbReference>
<dbReference type="GO" id="GO:0010043">
    <property type="term" value="P:response to zinc ion"/>
    <property type="evidence" value="ECO:0000318"/>
    <property type="project" value="GO_Central"/>
</dbReference>
<dbReference type="Gene3D" id="3.40.1190.20">
    <property type="match status" value="1"/>
</dbReference>
<dbReference type="InterPro" id="IPR002173">
    <property type="entry name" value="Carboh/pur_kinase_PfkB_CS"/>
</dbReference>
<dbReference type="InterPro" id="IPR011611">
    <property type="entry name" value="PfkB_dom"/>
</dbReference>
<dbReference type="InterPro" id="IPR029056">
    <property type="entry name" value="Ribokinase-like"/>
</dbReference>
<dbReference type="PANTHER" id="PTHR10584:SF166">
    <property type="entry name" value="RIBOKINASE"/>
    <property type="match status" value="1"/>
</dbReference>
<dbReference type="PANTHER" id="PTHR10584">
    <property type="entry name" value="SUGAR KINASE"/>
    <property type="match status" value="1"/>
</dbReference>
<dbReference type="Pfam" id="PF00294">
    <property type="entry name" value="PfkB"/>
    <property type="match status" value="1"/>
</dbReference>
<dbReference type="SUPFAM" id="SSF53613">
    <property type="entry name" value="Ribokinase-like"/>
    <property type="match status" value="1"/>
</dbReference>
<dbReference type="PROSITE" id="PS00584">
    <property type="entry name" value="PFKB_KINASES_2"/>
    <property type="match status" value="1"/>
</dbReference>
<organism>
    <name type="scientific">Dictyostelium discoideum</name>
    <name type="common">Social amoeba</name>
    <dbReference type="NCBI Taxonomy" id="44689"/>
    <lineage>
        <taxon>Eukaryota</taxon>
        <taxon>Amoebozoa</taxon>
        <taxon>Evosea</taxon>
        <taxon>Eumycetozoa</taxon>
        <taxon>Dictyostelia</taxon>
        <taxon>Dictyosteliales</taxon>
        <taxon>Dictyosteliaceae</taxon>
        <taxon>Dictyostelium</taxon>
    </lineage>
</organism>
<accession>Q54D80</accession>
<feature type="chain" id="PRO_0000327984" description="Uncharacterized sugar kinase">
    <location>
        <begin position="1"/>
        <end position="355"/>
    </location>
</feature>
<gene>
    <name type="ORF">DDB_G0292440</name>
</gene>